<evidence type="ECO:0000255" key="1">
    <source>
        <dbReference type="HAMAP-Rule" id="MF_00489"/>
    </source>
</evidence>
<gene>
    <name type="ordered locus">VIBHAR_03247</name>
</gene>
<accession>A7N1X1</accession>
<proteinExistence type="inferred from homology"/>
<organism>
    <name type="scientific">Vibrio campbellii (strain ATCC BAA-1116)</name>
    <dbReference type="NCBI Taxonomy" id="2902295"/>
    <lineage>
        <taxon>Bacteria</taxon>
        <taxon>Pseudomonadati</taxon>
        <taxon>Pseudomonadota</taxon>
        <taxon>Gammaproteobacteria</taxon>
        <taxon>Vibrionales</taxon>
        <taxon>Vibrionaceae</taxon>
        <taxon>Vibrio</taxon>
    </lineage>
</organism>
<comment type="similarity">
    <text evidence="1">Belongs to the UPF0178 family.</text>
</comment>
<sequence>MKLWVDADACPKVIRETIVRAAERTGVECTFVANHVVPVPKRANIHSLQVPAGFDIADNEIVRRVEANDLVITSDIPLADEVISKGAQALSSRGELYTKDTIKARLNIRDFMDTMRSSGIQTGGPAALSQTERREFANHLDRILAKR</sequence>
<protein>
    <recommendedName>
        <fullName evidence="1">UPF0178 protein VIBHAR_03247</fullName>
    </recommendedName>
</protein>
<dbReference type="EMBL" id="CP000789">
    <property type="protein sequence ID" value="ABU72195.1"/>
    <property type="molecule type" value="Genomic_DNA"/>
</dbReference>
<dbReference type="RefSeq" id="WP_005436748.1">
    <property type="nucleotide sequence ID" value="NC_022269.1"/>
</dbReference>
<dbReference type="SMR" id="A7N1X1"/>
<dbReference type="KEGG" id="vha:VIBHAR_03247"/>
<dbReference type="PATRIC" id="fig|338187.25.peg.2944"/>
<dbReference type="Proteomes" id="UP000008152">
    <property type="component" value="Chromosome I"/>
</dbReference>
<dbReference type="CDD" id="cd18720">
    <property type="entry name" value="PIN_YqxD-like"/>
    <property type="match status" value="1"/>
</dbReference>
<dbReference type="HAMAP" id="MF_00489">
    <property type="entry name" value="UPF0178"/>
    <property type="match status" value="1"/>
</dbReference>
<dbReference type="InterPro" id="IPR003791">
    <property type="entry name" value="UPF0178"/>
</dbReference>
<dbReference type="NCBIfam" id="NF001095">
    <property type="entry name" value="PRK00124.1"/>
    <property type="match status" value="1"/>
</dbReference>
<dbReference type="PANTHER" id="PTHR35146">
    <property type="entry name" value="UPF0178 PROTEIN YAII"/>
    <property type="match status" value="1"/>
</dbReference>
<dbReference type="PANTHER" id="PTHR35146:SF1">
    <property type="entry name" value="UPF0178 PROTEIN YAII"/>
    <property type="match status" value="1"/>
</dbReference>
<dbReference type="Pfam" id="PF02639">
    <property type="entry name" value="DUF188"/>
    <property type="match status" value="1"/>
</dbReference>
<feature type="chain" id="PRO_1000014454" description="UPF0178 protein VIBHAR_03247">
    <location>
        <begin position="1"/>
        <end position="147"/>
    </location>
</feature>
<reference key="1">
    <citation type="submission" date="2007-08" db="EMBL/GenBank/DDBJ databases">
        <authorList>
            <consortium name="The Vibrio harveyi Genome Sequencing Project"/>
            <person name="Bassler B."/>
            <person name="Clifton S.W."/>
            <person name="Fulton L."/>
            <person name="Delehaunty K."/>
            <person name="Fronick C."/>
            <person name="Harrison M."/>
            <person name="Markivic C."/>
            <person name="Fulton R."/>
            <person name="Tin-Wollam A.-M."/>
            <person name="Shah N."/>
            <person name="Pepin K."/>
            <person name="Nash W."/>
            <person name="Thiruvilangam P."/>
            <person name="Bhonagiri V."/>
            <person name="Waters C."/>
            <person name="Tu K.C."/>
            <person name="Irgon J."/>
            <person name="Wilson R.K."/>
        </authorList>
    </citation>
    <scope>NUCLEOTIDE SEQUENCE [LARGE SCALE GENOMIC DNA]</scope>
    <source>
        <strain>ATCC BAA-1116 / BB120</strain>
    </source>
</reference>
<name>Y3247_VIBC1</name>